<comment type="function">
    <text evidence="1">Binds as a heterodimer with protein bS6 to the central domain of the 16S rRNA, where it helps stabilize the platform of the 30S subunit.</text>
</comment>
<comment type="subunit">
    <text evidence="1">Part of the 30S ribosomal subunit. Forms a tight heterodimer with protein bS6.</text>
</comment>
<comment type="similarity">
    <text evidence="1">Belongs to the bacterial ribosomal protein bS18 family.</text>
</comment>
<organism>
    <name type="scientific">Chloroflexus aurantiacus (strain ATCC 29366 / DSM 635 / J-10-fl)</name>
    <dbReference type="NCBI Taxonomy" id="324602"/>
    <lineage>
        <taxon>Bacteria</taxon>
        <taxon>Bacillati</taxon>
        <taxon>Chloroflexota</taxon>
        <taxon>Chloroflexia</taxon>
        <taxon>Chloroflexales</taxon>
        <taxon>Chloroflexineae</taxon>
        <taxon>Chloroflexaceae</taxon>
        <taxon>Chloroflexus</taxon>
    </lineage>
</organism>
<reference key="1">
    <citation type="journal article" date="2011" name="BMC Genomics">
        <title>Complete genome sequence of the filamentous anoxygenic phototrophic bacterium Chloroflexus aurantiacus.</title>
        <authorList>
            <person name="Tang K.H."/>
            <person name="Barry K."/>
            <person name="Chertkov O."/>
            <person name="Dalin E."/>
            <person name="Han C.S."/>
            <person name="Hauser L.J."/>
            <person name="Honchak B.M."/>
            <person name="Karbach L.E."/>
            <person name="Land M.L."/>
            <person name="Lapidus A."/>
            <person name="Larimer F.W."/>
            <person name="Mikhailova N."/>
            <person name="Pitluck S."/>
            <person name="Pierson B.K."/>
            <person name="Blankenship R.E."/>
        </authorList>
    </citation>
    <scope>NUCLEOTIDE SEQUENCE [LARGE SCALE GENOMIC DNA]</scope>
    <source>
        <strain>ATCC 29366 / DSM 635 / J-10-fl</strain>
    </source>
</reference>
<dbReference type="EMBL" id="CP000909">
    <property type="protein sequence ID" value="ABY34930.1"/>
    <property type="molecule type" value="Genomic_DNA"/>
</dbReference>
<dbReference type="RefSeq" id="WP_012257584.1">
    <property type="nucleotide sequence ID" value="NC_010175.1"/>
</dbReference>
<dbReference type="RefSeq" id="YP_001635319.1">
    <property type="nucleotide sequence ID" value="NC_010175.1"/>
</dbReference>
<dbReference type="SMR" id="A9WCD9"/>
<dbReference type="FunCoup" id="A9WCD9">
    <property type="interactions" value="435"/>
</dbReference>
<dbReference type="STRING" id="324602.Caur_1713"/>
<dbReference type="EnsemblBacteria" id="ABY34930">
    <property type="protein sequence ID" value="ABY34930"/>
    <property type="gene ID" value="Caur_1713"/>
</dbReference>
<dbReference type="KEGG" id="cau:Caur_1713"/>
<dbReference type="PATRIC" id="fig|324602.8.peg.1953"/>
<dbReference type="eggNOG" id="COG0238">
    <property type="taxonomic scope" value="Bacteria"/>
</dbReference>
<dbReference type="HOGENOM" id="CLU_148710_2_2_0"/>
<dbReference type="InParanoid" id="A9WCD9"/>
<dbReference type="Proteomes" id="UP000002008">
    <property type="component" value="Chromosome"/>
</dbReference>
<dbReference type="GO" id="GO:0022627">
    <property type="term" value="C:cytosolic small ribosomal subunit"/>
    <property type="evidence" value="ECO:0000318"/>
    <property type="project" value="GO_Central"/>
</dbReference>
<dbReference type="GO" id="GO:0070181">
    <property type="term" value="F:small ribosomal subunit rRNA binding"/>
    <property type="evidence" value="ECO:0000318"/>
    <property type="project" value="GO_Central"/>
</dbReference>
<dbReference type="GO" id="GO:0003735">
    <property type="term" value="F:structural constituent of ribosome"/>
    <property type="evidence" value="ECO:0000318"/>
    <property type="project" value="GO_Central"/>
</dbReference>
<dbReference type="GO" id="GO:0006412">
    <property type="term" value="P:translation"/>
    <property type="evidence" value="ECO:0000318"/>
    <property type="project" value="GO_Central"/>
</dbReference>
<dbReference type="FunFam" id="4.10.640.10:FF:000027">
    <property type="entry name" value="30S ribosomal protein S18"/>
    <property type="match status" value="1"/>
</dbReference>
<dbReference type="Gene3D" id="4.10.640.10">
    <property type="entry name" value="Ribosomal protein S18"/>
    <property type="match status" value="1"/>
</dbReference>
<dbReference type="HAMAP" id="MF_00270">
    <property type="entry name" value="Ribosomal_bS18"/>
    <property type="match status" value="1"/>
</dbReference>
<dbReference type="InterPro" id="IPR001648">
    <property type="entry name" value="Ribosomal_bS18"/>
</dbReference>
<dbReference type="InterPro" id="IPR036870">
    <property type="entry name" value="Ribosomal_bS18_sf"/>
</dbReference>
<dbReference type="NCBIfam" id="TIGR00165">
    <property type="entry name" value="S18"/>
    <property type="match status" value="1"/>
</dbReference>
<dbReference type="PANTHER" id="PTHR13479">
    <property type="entry name" value="30S RIBOSOMAL PROTEIN S18"/>
    <property type="match status" value="1"/>
</dbReference>
<dbReference type="PANTHER" id="PTHR13479:SF40">
    <property type="entry name" value="SMALL RIBOSOMAL SUBUNIT PROTEIN BS18M"/>
    <property type="match status" value="1"/>
</dbReference>
<dbReference type="Pfam" id="PF01084">
    <property type="entry name" value="Ribosomal_S18"/>
    <property type="match status" value="1"/>
</dbReference>
<dbReference type="PRINTS" id="PR00974">
    <property type="entry name" value="RIBOSOMALS18"/>
</dbReference>
<dbReference type="SUPFAM" id="SSF46911">
    <property type="entry name" value="Ribosomal protein S18"/>
    <property type="match status" value="1"/>
</dbReference>
<evidence type="ECO:0000255" key="1">
    <source>
        <dbReference type="HAMAP-Rule" id="MF_00270"/>
    </source>
</evidence>
<evidence type="ECO:0000305" key="2"/>
<feature type="chain" id="PRO_1000078694" description="Small ribosomal subunit protein bS18">
    <location>
        <begin position="1"/>
        <end position="81"/>
    </location>
</feature>
<accession>A9WCD9</accession>
<keyword id="KW-1185">Reference proteome</keyword>
<keyword id="KW-0687">Ribonucleoprotein</keyword>
<keyword id="KW-0689">Ribosomal protein</keyword>
<keyword id="KW-0694">RNA-binding</keyword>
<keyword id="KW-0699">rRNA-binding</keyword>
<sequence>MSRSRASGRPRSRRRECEFTKLGIVPDYKDVKRLQKYLTAQGKILPRRRTGVSAKMQRRLAVAIKRARHLALLPVAPSHTR</sequence>
<protein>
    <recommendedName>
        <fullName evidence="1">Small ribosomal subunit protein bS18</fullName>
    </recommendedName>
    <alternativeName>
        <fullName evidence="2">30S ribosomal protein S18</fullName>
    </alternativeName>
</protein>
<proteinExistence type="inferred from homology"/>
<gene>
    <name evidence="1" type="primary">rpsR</name>
    <name type="ordered locus">Caur_1713</name>
</gene>
<name>RS18_CHLAA</name>